<dbReference type="EC" id="2.7.4.25" evidence="1"/>
<dbReference type="EMBL" id="AE017283">
    <property type="protein sequence ID" value="AAT82958.1"/>
    <property type="molecule type" value="Genomic_DNA"/>
</dbReference>
<dbReference type="RefSeq" id="WP_002516760.1">
    <property type="nucleotide sequence ID" value="NZ_CP025935.1"/>
</dbReference>
<dbReference type="SMR" id="Q6A8F7"/>
<dbReference type="EnsemblBacteria" id="AAT82958">
    <property type="protein sequence ID" value="AAT82958"/>
    <property type="gene ID" value="PPA1209"/>
</dbReference>
<dbReference type="GeneID" id="92857179"/>
<dbReference type="KEGG" id="pac:PPA1209"/>
<dbReference type="eggNOG" id="COG0283">
    <property type="taxonomic scope" value="Bacteria"/>
</dbReference>
<dbReference type="HOGENOM" id="CLU_079959_0_0_11"/>
<dbReference type="Proteomes" id="UP000000603">
    <property type="component" value="Chromosome"/>
</dbReference>
<dbReference type="GO" id="GO:0005737">
    <property type="term" value="C:cytoplasm"/>
    <property type="evidence" value="ECO:0007669"/>
    <property type="project" value="UniProtKB-SubCell"/>
</dbReference>
<dbReference type="GO" id="GO:0005524">
    <property type="term" value="F:ATP binding"/>
    <property type="evidence" value="ECO:0007669"/>
    <property type="project" value="UniProtKB-UniRule"/>
</dbReference>
<dbReference type="GO" id="GO:0036430">
    <property type="term" value="F:CMP kinase activity"/>
    <property type="evidence" value="ECO:0007669"/>
    <property type="project" value="RHEA"/>
</dbReference>
<dbReference type="GO" id="GO:0036431">
    <property type="term" value="F:dCMP kinase activity"/>
    <property type="evidence" value="ECO:0007669"/>
    <property type="project" value="RHEA"/>
</dbReference>
<dbReference type="GO" id="GO:0006220">
    <property type="term" value="P:pyrimidine nucleotide metabolic process"/>
    <property type="evidence" value="ECO:0007669"/>
    <property type="project" value="UniProtKB-UniRule"/>
</dbReference>
<dbReference type="CDD" id="cd02020">
    <property type="entry name" value="CMPK"/>
    <property type="match status" value="1"/>
</dbReference>
<dbReference type="Gene3D" id="3.40.50.300">
    <property type="entry name" value="P-loop containing nucleotide triphosphate hydrolases"/>
    <property type="match status" value="1"/>
</dbReference>
<dbReference type="HAMAP" id="MF_00238">
    <property type="entry name" value="Cytidyl_kinase_type1"/>
    <property type="match status" value="1"/>
</dbReference>
<dbReference type="InterPro" id="IPR003136">
    <property type="entry name" value="Cytidylate_kin"/>
</dbReference>
<dbReference type="InterPro" id="IPR011994">
    <property type="entry name" value="Cytidylate_kinase_dom"/>
</dbReference>
<dbReference type="InterPro" id="IPR027417">
    <property type="entry name" value="P-loop_NTPase"/>
</dbReference>
<dbReference type="NCBIfam" id="TIGR00017">
    <property type="entry name" value="cmk"/>
    <property type="match status" value="1"/>
</dbReference>
<dbReference type="Pfam" id="PF02224">
    <property type="entry name" value="Cytidylate_kin"/>
    <property type="match status" value="1"/>
</dbReference>
<dbReference type="SUPFAM" id="SSF52540">
    <property type="entry name" value="P-loop containing nucleoside triphosphate hydrolases"/>
    <property type="match status" value="1"/>
</dbReference>
<name>KCY_CUTAK</name>
<sequence>MSTSPLVIAIDGPSGSGKSSTSRGVANRLGLARLDTGSMYRAVACRVAHLGIDPTTNPRDAIKVAQSCHLEIDTSAIDDRVVIDGEDVTKEIRDPQTSAKVSAVATIQPVRDALTARMRQVAADRGRIVMEGRDITTVVCPDAQVRVLLVADPAIRVARRQAELGEKVDMAQVIDSIVRRDRDDSTVSTFEEPAEGVTVVDSTHLNLDQVIDAVIDLVPVTLR</sequence>
<organism>
    <name type="scientific">Cutibacterium acnes (strain DSM 16379 / KPA171202)</name>
    <name type="common">Propionibacterium acnes</name>
    <dbReference type="NCBI Taxonomy" id="267747"/>
    <lineage>
        <taxon>Bacteria</taxon>
        <taxon>Bacillati</taxon>
        <taxon>Actinomycetota</taxon>
        <taxon>Actinomycetes</taxon>
        <taxon>Propionibacteriales</taxon>
        <taxon>Propionibacteriaceae</taxon>
        <taxon>Cutibacterium</taxon>
    </lineage>
</organism>
<evidence type="ECO:0000255" key="1">
    <source>
        <dbReference type="HAMAP-Rule" id="MF_00238"/>
    </source>
</evidence>
<evidence type="ECO:0000256" key="2">
    <source>
        <dbReference type="SAM" id="MobiDB-lite"/>
    </source>
</evidence>
<feature type="chain" id="PRO_0000131955" description="Cytidylate kinase">
    <location>
        <begin position="1"/>
        <end position="223"/>
    </location>
</feature>
<feature type="region of interest" description="Disordered" evidence="2">
    <location>
        <begin position="1"/>
        <end position="23"/>
    </location>
</feature>
<feature type="binding site" evidence="1">
    <location>
        <begin position="12"/>
        <end position="20"/>
    </location>
    <ligand>
        <name>ATP</name>
        <dbReference type="ChEBI" id="CHEBI:30616"/>
    </ligand>
</feature>
<comment type="catalytic activity">
    <reaction evidence="1">
        <text>CMP + ATP = CDP + ADP</text>
        <dbReference type="Rhea" id="RHEA:11600"/>
        <dbReference type="ChEBI" id="CHEBI:30616"/>
        <dbReference type="ChEBI" id="CHEBI:58069"/>
        <dbReference type="ChEBI" id="CHEBI:60377"/>
        <dbReference type="ChEBI" id="CHEBI:456216"/>
        <dbReference type="EC" id="2.7.4.25"/>
    </reaction>
</comment>
<comment type="catalytic activity">
    <reaction evidence="1">
        <text>dCMP + ATP = dCDP + ADP</text>
        <dbReference type="Rhea" id="RHEA:25094"/>
        <dbReference type="ChEBI" id="CHEBI:30616"/>
        <dbReference type="ChEBI" id="CHEBI:57566"/>
        <dbReference type="ChEBI" id="CHEBI:58593"/>
        <dbReference type="ChEBI" id="CHEBI:456216"/>
        <dbReference type="EC" id="2.7.4.25"/>
    </reaction>
</comment>
<comment type="subcellular location">
    <subcellularLocation>
        <location evidence="1">Cytoplasm</location>
    </subcellularLocation>
</comment>
<comment type="similarity">
    <text evidence="1">Belongs to the cytidylate kinase family. Type 1 subfamily.</text>
</comment>
<keyword id="KW-0067">ATP-binding</keyword>
<keyword id="KW-0963">Cytoplasm</keyword>
<keyword id="KW-0418">Kinase</keyword>
<keyword id="KW-0547">Nucleotide-binding</keyword>
<keyword id="KW-0808">Transferase</keyword>
<accession>Q6A8F7</accession>
<protein>
    <recommendedName>
        <fullName evidence="1">Cytidylate kinase</fullName>
        <shortName evidence="1">CK</shortName>
        <ecNumber evidence="1">2.7.4.25</ecNumber>
    </recommendedName>
    <alternativeName>
        <fullName evidence="1">Cytidine monophosphate kinase</fullName>
        <shortName evidence="1">CMP kinase</shortName>
    </alternativeName>
</protein>
<reference key="1">
    <citation type="journal article" date="2004" name="Science">
        <title>The complete genome sequence of Propionibacterium acnes, a commensal of human skin.</title>
        <authorList>
            <person name="Brueggemann H."/>
            <person name="Henne A."/>
            <person name="Hoster F."/>
            <person name="Liesegang H."/>
            <person name="Wiezer A."/>
            <person name="Strittmatter A."/>
            <person name="Hujer S."/>
            <person name="Duerre P."/>
            <person name="Gottschalk G."/>
        </authorList>
    </citation>
    <scope>NUCLEOTIDE SEQUENCE [LARGE SCALE GENOMIC DNA]</scope>
    <source>
        <strain>DSM 16379 / KPA171202</strain>
    </source>
</reference>
<proteinExistence type="inferred from homology"/>
<gene>
    <name evidence="1" type="primary">cmk</name>
    <name type="ordered locus">PPA1209</name>
</gene>